<comment type="function">
    <text evidence="1">This protein is responsible for splicing and maturation of cytochrome b mRNA. Specifically, it may be responsible for the splicing specificity of the second intron (By similarity).</text>
</comment>
<comment type="subcellular location">
    <subcellularLocation>
        <location>Mitochondrion</location>
    </subcellularLocation>
</comment>
<comment type="miscellaneous">
    <text>Encoded within intron 2 of COB.</text>
</comment>
<comment type="similarity">
    <text evidence="2">Belongs to the LAGLIDADG endonuclease family.</text>
</comment>
<feature type="chain" id="PRO_0000355041" description="Cytochrome b mRNA maturase bI2">
    <location>
        <begin position="1"/>
        <end position="262"/>
    </location>
</feature>
<accession>A9RAG8</accession>
<protein>
    <recommendedName>
        <fullName>Cytochrome b mRNA maturase bI2</fullName>
    </recommendedName>
</protein>
<dbReference type="EMBL" id="DQ508940">
    <property type="protein sequence ID" value="ABF58069.1"/>
    <property type="molecule type" value="Genomic_DNA"/>
</dbReference>
<dbReference type="SMR" id="A9RAG8"/>
<dbReference type="STRING" id="284592.A9RAG8"/>
<dbReference type="InParanoid" id="A9RAG8"/>
<dbReference type="Proteomes" id="UP000000599">
    <property type="component" value="Mitochondrion"/>
</dbReference>
<dbReference type="GO" id="GO:0005739">
    <property type="term" value="C:mitochondrion"/>
    <property type="evidence" value="ECO:0007669"/>
    <property type="project" value="UniProtKB-SubCell"/>
</dbReference>
<dbReference type="GO" id="GO:0004519">
    <property type="term" value="F:endonuclease activity"/>
    <property type="evidence" value="ECO:0007669"/>
    <property type="project" value="InterPro"/>
</dbReference>
<dbReference type="GO" id="GO:0006397">
    <property type="term" value="P:mRNA processing"/>
    <property type="evidence" value="ECO:0007669"/>
    <property type="project" value="UniProtKB-KW"/>
</dbReference>
<dbReference type="GO" id="GO:0008380">
    <property type="term" value="P:RNA splicing"/>
    <property type="evidence" value="ECO:0007669"/>
    <property type="project" value="UniProtKB-KW"/>
</dbReference>
<dbReference type="Gene3D" id="3.10.28.10">
    <property type="entry name" value="Homing endonucleases"/>
    <property type="match status" value="2"/>
</dbReference>
<dbReference type="InterPro" id="IPR027434">
    <property type="entry name" value="Homing_endonucl"/>
</dbReference>
<dbReference type="InterPro" id="IPR004860">
    <property type="entry name" value="LAGLIDADG_dom"/>
</dbReference>
<dbReference type="Pfam" id="PF03161">
    <property type="entry name" value="LAGLIDADG_2"/>
    <property type="match status" value="1"/>
</dbReference>
<dbReference type="SUPFAM" id="SSF55608">
    <property type="entry name" value="Homing endonucleases"/>
    <property type="match status" value="1"/>
</dbReference>
<reference key="1">
    <citation type="journal article" date="2008" name="FEMS Yeast Res.">
        <title>Promiscuous DNA in the nuclear genomes of hemiascomycetous yeasts.</title>
        <authorList>
            <person name="Sacerdot C."/>
            <person name="Casaregola S."/>
            <person name="Lafontaine I."/>
            <person name="Tekaia F."/>
            <person name="Dujon B."/>
            <person name="Ozier-Kalogeropoulos O."/>
        </authorList>
    </citation>
    <scope>NUCLEOTIDE SEQUENCE [LARGE SCALE GENOMIC DNA]</scope>
    <source>
        <strain>ATCC 36239 / CBS 767 / BCRC 21394 / JCM 1990 / NBRC 0083 / IGC 2968</strain>
    </source>
</reference>
<gene>
    <name type="primary">bI2</name>
</gene>
<organism>
    <name type="scientific">Debaryomyces hansenii (strain ATCC 36239 / CBS 767 / BCRC 21394 / JCM 1990 / NBRC 0083 / IGC 2968)</name>
    <name type="common">Yeast</name>
    <name type="synonym">Torulaspora hansenii</name>
    <dbReference type="NCBI Taxonomy" id="284592"/>
    <lineage>
        <taxon>Eukaryota</taxon>
        <taxon>Fungi</taxon>
        <taxon>Dikarya</taxon>
        <taxon>Ascomycota</taxon>
        <taxon>Saccharomycotina</taxon>
        <taxon>Pichiomycetes</taxon>
        <taxon>Debaryomycetaceae</taxon>
        <taxon>Debaryomyces</taxon>
    </lineage>
</organism>
<keyword id="KW-0378">Hydrolase</keyword>
<keyword id="KW-0496">Mitochondrion</keyword>
<keyword id="KW-0507">mRNA processing</keyword>
<keyword id="KW-0508">mRNA splicing</keyword>
<keyword id="KW-0540">Nuclease</keyword>
<keyword id="KW-1185">Reference proteome</keyword>
<geneLocation type="mitochondrion"/>
<sequence>MLLYIFFLMYTTRSRDMSTLQSNMFKFYNAPHSGMYPTFWVGHLKTMIKICVKRSDVINFNKPLDKEMLEMMYGSLLGDASAEKRKGGKGTRMLFYQEGSHNEYLLFLHRLIANLGYCNTNIPKLQTRISNNGKIRKIIKFSTWTYDQFNEMHKNWYINGKKVLPNDIDQFLSPLALAIWIMDDGGKMGKGLKLATNNFTLNEVKQLMAMLDVKYNIKSTMHKTGAMDQYNMYMLSDSMPILVKKIKPYIVPSMKYKLGNYM</sequence>
<evidence type="ECO:0000250" key="1"/>
<evidence type="ECO:0000305" key="2"/>
<proteinExistence type="inferred from homology"/>
<name>MBI2_DEBHA</name>